<proteinExistence type="inferred from homology"/>
<organism>
    <name type="scientific">Methylobacterium radiotolerans (strain ATCC 27329 / DSM 1819 / JCM 2831 / NBRC 15690 / NCIMB 10815 / 0-1)</name>
    <dbReference type="NCBI Taxonomy" id="426355"/>
    <lineage>
        <taxon>Bacteria</taxon>
        <taxon>Pseudomonadati</taxon>
        <taxon>Pseudomonadota</taxon>
        <taxon>Alphaproteobacteria</taxon>
        <taxon>Hyphomicrobiales</taxon>
        <taxon>Methylobacteriaceae</taxon>
        <taxon>Methylobacterium</taxon>
    </lineage>
</organism>
<sequence>MLTTSSARFDVAVVGGGHAGVEAAAAAARCGARTALVTHDPATIGAMSCNPAIGGLGKGHLVREVDALDGLMGRVADAAGIQFRLLNRRKGPAVRGPRTQADRKLYAAAMQTAVAETAGLTVVAGACEDLAFDAEGRLCGLVLADGRTLACGAVVLTTGTFLRGLIHIGERQIPAGRVGEAPAVGLAQTLERLGLRLGRLKTGTPPRLDGRTIDWSGLEMQEADAEPVPFSTLTERITNPQIRCGITRTTRAVHDLIRANLHRSPMYSGGIASRGPRYCPSIEDKVVRFGDREGHQIFLEPEGLDDPTIYPNGISTALPEAVQRDLVRLIPGLERVEILRPGYAIEYDYVDPRELDLGLQVKRLPGLFLAGQINGTTGYEEAAGQGLVAGLNAARHAGGLGIAGFDRAESYLGVMIDDLVTQGVSEPYRMFTSRSEYRLSLRVDNADARLTPRGIALGCVGGHRAAQFAAGQAALGAARARLDAVSLTPSQAAPHGISLNRDGIRRTGFQLLAYPEIGWADLAAVWPDLAEVPPRIADRMKTDATYAVYLDRQNADIAAFRRDEAVRLPPGLDYAAISGLSNEMRVKLETVRPGTLGQAARIEGVTPAALTLLAAHARRGARAPSAPADRHPA</sequence>
<gene>
    <name evidence="1" type="primary">mnmG</name>
    <name evidence="1" type="synonym">gidA</name>
    <name type="ordered locus">Mrad2831_4091</name>
</gene>
<name>MNMG_METRJ</name>
<feature type="chain" id="PRO_0000345300" description="tRNA uridine 5-carboxymethylaminomethyl modification enzyme MnmG">
    <location>
        <begin position="1"/>
        <end position="633"/>
    </location>
</feature>
<feature type="binding site" evidence="1">
    <location>
        <begin position="15"/>
        <end position="20"/>
    </location>
    <ligand>
        <name>FAD</name>
        <dbReference type="ChEBI" id="CHEBI:57692"/>
    </ligand>
</feature>
<feature type="binding site" evidence="1">
    <location>
        <begin position="275"/>
        <end position="289"/>
    </location>
    <ligand>
        <name>NAD(+)</name>
        <dbReference type="ChEBI" id="CHEBI:57540"/>
    </ligand>
</feature>
<evidence type="ECO:0000255" key="1">
    <source>
        <dbReference type="HAMAP-Rule" id="MF_00129"/>
    </source>
</evidence>
<protein>
    <recommendedName>
        <fullName evidence="1">tRNA uridine 5-carboxymethylaminomethyl modification enzyme MnmG</fullName>
    </recommendedName>
    <alternativeName>
        <fullName evidence="1">Glucose-inhibited division protein A</fullName>
    </alternativeName>
</protein>
<comment type="function">
    <text evidence="1">NAD-binding protein involved in the addition of a carboxymethylaminomethyl (cmnm) group at the wobble position (U34) of certain tRNAs, forming tRNA-cmnm(5)s(2)U34.</text>
</comment>
<comment type="cofactor">
    <cofactor evidence="1">
        <name>FAD</name>
        <dbReference type="ChEBI" id="CHEBI:57692"/>
    </cofactor>
</comment>
<comment type="subunit">
    <text evidence="1">Homodimer. Heterotetramer of two MnmE and two MnmG subunits.</text>
</comment>
<comment type="subcellular location">
    <subcellularLocation>
        <location evidence="1">Cytoplasm</location>
    </subcellularLocation>
</comment>
<comment type="similarity">
    <text evidence="1">Belongs to the MnmG family.</text>
</comment>
<keyword id="KW-0963">Cytoplasm</keyword>
<keyword id="KW-0274">FAD</keyword>
<keyword id="KW-0285">Flavoprotein</keyword>
<keyword id="KW-0520">NAD</keyword>
<keyword id="KW-0819">tRNA processing</keyword>
<reference key="1">
    <citation type="submission" date="2008-03" db="EMBL/GenBank/DDBJ databases">
        <title>Complete sequence of chromosome of Methylobacterium radiotolerans JCM 2831.</title>
        <authorList>
            <consortium name="US DOE Joint Genome Institute"/>
            <person name="Copeland A."/>
            <person name="Lucas S."/>
            <person name="Lapidus A."/>
            <person name="Glavina del Rio T."/>
            <person name="Dalin E."/>
            <person name="Tice H."/>
            <person name="Bruce D."/>
            <person name="Goodwin L."/>
            <person name="Pitluck S."/>
            <person name="Kiss H."/>
            <person name="Brettin T."/>
            <person name="Detter J.C."/>
            <person name="Han C."/>
            <person name="Kuske C.R."/>
            <person name="Schmutz J."/>
            <person name="Larimer F."/>
            <person name="Land M."/>
            <person name="Hauser L."/>
            <person name="Kyrpides N."/>
            <person name="Mikhailova N."/>
            <person name="Marx C.J."/>
            <person name="Richardson P."/>
        </authorList>
    </citation>
    <scope>NUCLEOTIDE SEQUENCE [LARGE SCALE GENOMIC DNA]</scope>
    <source>
        <strain>ATCC 27329 / DSM 1819 / JCM 2831 / NBRC 15690 / NCIMB 10815 / 0-1</strain>
    </source>
</reference>
<accession>B1M186</accession>
<dbReference type="EMBL" id="CP001001">
    <property type="protein sequence ID" value="ACB26061.1"/>
    <property type="molecule type" value="Genomic_DNA"/>
</dbReference>
<dbReference type="RefSeq" id="WP_012321017.1">
    <property type="nucleotide sequence ID" value="NC_010505.1"/>
</dbReference>
<dbReference type="SMR" id="B1M186"/>
<dbReference type="STRING" id="426355.Mrad2831_4091"/>
<dbReference type="GeneID" id="6140149"/>
<dbReference type="KEGG" id="mrd:Mrad2831_4091"/>
<dbReference type="PATRIC" id="fig|426355.14.peg.4184"/>
<dbReference type="eggNOG" id="COG0445">
    <property type="taxonomic scope" value="Bacteria"/>
</dbReference>
<dbReference type="HOGENOM" id="CLU_007831_2_2_5"/>
<dbReference type="OrthoDB" id="9815560at2"/>
<dbReference type="Proteomes" id="UP000006589">
    <property type="component" value="Chromosome"/>
</dbReference>
<dbReference type="GO" id="GO:0005829">
    <property type="term" value="C:cytosol"/>
    <property type="evidence" value="ECO:0007669"/>
    <property type="project" value="TreeGrafter"/>
</dbReference>
<dbReference type="GO" id="GO:0050660">
    <property type="term" value="F:flavin adenine dinucleotide binding"/>
    <property type="evidence" value="ECO:0007669"/>
    <property type="project" value="UniProtKB-UniRule"/>
</dbReference>
<dbReference type="GO" id="GO:0030488">
    <property type="term" value="P:tRNA methylation"/>
    <property type="evidence" value="ECO:0007669"/>
    <property type="project" value="TreeGrafter"/>
</dbReference>
<dbReference type="GO" id="GO:0002098">
    <property type="term" value="P:tRNA wobble uridine modification"/>
    <property type="evidence" value="ECO:0007669"/>
    <property type="project" value="InterPro"/>
</dbReference>
<dbReference type="FunFam" id="3.50.50.60:FF:000082">
    <property type="entry name" value="protein MTO1 homolog, mitochondrial isoform X1"/>
    <property type="match status" value="1"/>
</dbReference>
<dbReference type="FunFam" id="1.10.150.570:FF:000001">
    <property type="entry name" value="tRNA uridine 5-carboxymethylaminomethyl modification enzyme MnmG"/>
    <property type="match status" value="1"/>
</dbReference>
<dbReference type="FunFam" id="3.50.50.60:FF:000002">
    <property type="entry name" value="tRNA uridine 5-carboxymethylaminomethyl modification enzyme MnmG"/>
    <property type="match status" value="1"/>
</dbReference>
<dbReference type="Gene3D" id="3.50.50.60">
    <property type="entry name" value="FAD/NAD(P)-binding domain"/>
    <property type="match status" value="2"/>
</dbReference>
<dbReference type="Gene3D" id="1.10.150.570">
    <property type="entry name" value="GidA associated domain, C-terminal subdomain"/>
    <property type="match status" value="1"/>
</dbReference>
<dbReference type="HAMAP" id="MF_00129">
    <property type="entry name" value="MnmG_GidA"/>
    <property type="match status" value="1"/>
</dbReference>
<dbReference type="InterPro" id="IPR036188">
    <property type="entry name" value="FAD/NAD-bd_sf"/>
</dbReference>
<dbReference type="InterPro" id="IPR049312">
    <property type="entry name" value="GIDA_C_N"/>
</dbReference>
<dbReference type="InterPro" id="IPR004416">
    <property type="entry name" value="MnmG"/>
</dbReference>
<dbReference type="InterPro" id="IPR002218">
    <property type="entry name" value="MnmG-rel"/>
</dbReference>
<dbReference type="InterPro" id="IPR020595">
    <property type="entry name" value="MnmG-rel_CS"/>
</dbReference>
<dbReference type="InterPro" id="IPR026904">
    <property type="entry name" value="MnmG_C"/>
</dbReference>
<dbReference type="InterPro" id="IPR047001">
    <property type="entry name" value="MnmG_C_subdom"/>
</dbReference>
<dbReference type="InterPro" id="IPR044920">
    <property type="entry name" value="MnmG_C_subdom_sf"/>
</dbReference>
<dbReference type="InterPro" id="IPR040131">
    <property type="entry name" value="MnmG_N"/>
</dbReference>
<dbReference type="NCBIfam" id="TIGR00136">
    <property type="entry name" value="mnmG_gidA"/>
    <property type="match status" value="1"/>
</dbReference>
<dbReference type="PANTHER" id="PTHR11806">
    <property type="entry name" value="GLUCOSE INHIBITED DIVISION PROTEIN A"/>
    <property type="match status" value="1"/>
</dbReference>
<dbReference type="PANTHER" id="PTHR11806:SF0">
    <property type="entry name" value="PROTEIN MTO1 HOMOLOG, MITOCHONDRIAL"/>
    <property type="match status" value="1"/>
</dbReference>
<dbReference type="Pfam" id="PF01134">
    <property type="entry name" value="GIDA"/>
    <property type="match status" value="1"/>
</dbReference>
<dbReference type="Pfam" id="PF21680">
    <property type="entry name" value="GIDA_C_1st"/>
    <property type="match status" value="1"/>
</dbReference>
<dbReference type="Pfam" id="PF13932">
    <property type="entry name" value="SAM_GIDA_C"/>
    <property type="match status" value="1"/>
</dbReference>
<dbReference type="SMART" id="SM01228">
    <property type="entry name" value="GIDA_assoc_3"/>
    <property type="match status" value="1"/>
</dbReference>
<dbReference type="SUPFAM" id="SSF51905">
    <property type="entry name" value="FAD/NAD(P)-binding domain"/>
    <property type="match status" value="1"/>
</dbReference>
<dbReference type="PROSITE" id="PS01280">
    <property type="entry name" value="GIDA_1"/>
    <property type="match status" value="1"/>
</dbReference>
<dbReference type="PROSITE" id="PS01281">
    <property type="entry name" value="GIDA_2"/>
    <property type="match status" value="1"/>
</dbReference>